<name>FABPI_RHASA</name>
<evidence type="ECO:0000305" key="1"/>
<organism>
    <name type="scientific">Rhamdia sapo</name>
    <name type="common">South American catfish</name>
    <dbReference type="NCBI Taxonomy" id="55673"/>
    <lineage>
        <taxon>Eukaryota</taxon>
        <taxon>Metazoa</taxon>
        <taxon>Chordata</taxon>
        <taxon>Craniata</taxon>
        <taxon>Vertebrata</taxon>
        <taxon>Euteleostomi</taxon>
        <taxon>Actinopterygii</taxon>
        <taxon>Neopterygii</taxon>
        <taxon>Teleostei</taxon>
        <taxon>Ostariophysi</taxon>
        <taxon>Siluriformes</taxon>
        <taxon>Pimelodidae</taxon>
        <taxon>Rhamdia</taxon>
    </lineage>
</organism>
<feature type="chain" id="PRO_0000067332" description="Fatty acid-binding protein, intestinal">
    <location>
        <begin position="1" status="less than"/>
        <end position="33" status="greater than"/>
    </location>
</feature>
<feature type="non-consecutive residues" evidence="1">
    <location>
        <begin position="12"/>
        <end position="13"/>
    </location>
</feature>
<feature type="non-consecutive residues" evidence="1">
    <location>
        <begin position="20"/>
        <end position="21"/>
    </location>
</feature>
<feature type="non-consecutive residues" evidence="1">
    <location>
        <begin position="28"/>
        <end position="29"/>
    </location>
</feature>
<feature type="non-terminal residue">
    <location>
        <position position="1"/>
    </location>
</feature>
<feature type="non-terminal residue">
    <location>
        <position position="33"/>
    </location>
</feature>
<accession>P81175</accession>
<gene>
    <name type="primary">fabp2</name>
</gene>
<proteinExistence type="evidence at protein level"/>
<protein>
    <recommendedName>
        <fullName>Fatty acid-binding protein, intestinal</fullName>
    </recommendedName>
    <alternativeName>
        <fullName>Fatty acid-binding protein 2</fullName>
    </alternativeName>
    <alternativeName>
        <fullName>Intestinal-type fatty acid-binding protein</fullName>
        <shortName>I-FABP</shortName>
    </alternativeName>
</protein>
<keyword id="KW-0963">Cytoplasm</keyword>
<keyword id="KW-0903">Direct protein sequencing</keyword>
<keyword id="KW-0446">Lipid-binding</keyword>
<keyword id="KW-0813">Transport</keyword>
<reference key="1">
    <citation type="journal article" date="1997" name="Eur. J. Biochem.">
        <title>Amino acid sequence, binding properties and evolutionary relationships of the basic liver fatty-acid-binding protein from the catfish Rhamdia sapo.</title>
        <authorList>
            <person name="Di Pietro S.M."/>
            <person name="Dell'Angelica E.C."/>
            <person name="Veerkamp J.H."/>
            <person name="Sterin-Speziale N."/>
            <person name="Santome J.A."/>
        </authorList>
    </citation>
    <scope>PROTEIN SEQUENCE</scope>
    <source>
        <tissue>Intestine</tissue>
    </source>
</reference>
<sequence>YQLESQEGFVPFSVSEIEQRVTVTTGSKTVVTL</sequence>
<comment type="function">
    <text>FABPs are thought to play a role in the intracellular transport of long-chain fatty acids and their acyl-CoA esters.</text>
</comment>
<comment type="subcellular location">
    <subcellularLocation>
        <location>Cytoplasm</location>
    </subcellularLocation>
</comment>
<comment type="tissue specificity">
    <text>Intestine.</text>
</comment>
<comment type="similarity">
    <text evidence="1">Belongs to the calycin superfamily. Fatty-acid binding protein (FABP) family.</text>
</comment>
<dbReference type="GO" id="GO:0005737">
    <property type="term" value="C:cytoplasm"/>
    <property type="evidence" value="ECO:0007669"/>
    <property type="project" value="UniProtKB-SubCell"/>
</dbReference>
<dbReference type="GO" id="GO:0008289">
    <property type="term" value="F:lipid binding"/>
    <property type="evidence" value="ECO:0007669"/>
    <property type="project" value="UniProtKB-KW"/>
</dbReference>